<accession>Q49YM0</accession>
<dbReference type="EMBL" id="AP008934">
    <property type="protein sequence ID" value="BAE18117.1"/>
    <property type="molecule type" value="Genomic_DNA"/>
</dbReference>
<dbReference type="KEGG" id="ssp:SSP0972"/>
<dbReference type="eggNOG" id="COG0759">
    <property type="taxonomic scope" value="Bacteria"/>
</dbReference>
<dbReference type="HOGENOM" id="CLU_144811_6_0_9"/>
<dbReference type="OrthoDB" id="9801753at2"/>
<dbReference type="Proteomes" id="UP000006371">
    <property type="component" value="Chromosome"/>
</dbReference>
<dbReference type="GO" id="GO:0005886">
    <property type="term" value="C:plasma membrane"/>
    <property type="evidence" value="ECO:0007669"/>
    <property type="project" value="UniProtKB-SubCell"/>
</dbReference>
<dbReference type="HAMAP" id="MF_00386">
    <property type="entry name" value="UPF0161_YidD"/>
    <property type="match status" value="1"/>
</dbReference>
<dbReference type="InterPro" id="IPR002696">
    <property type="entry name" value="Membr_insert_effic_factor_YidD"/>
</dbReference>
<dbReference type="NCBIfam" id="TIGR00278">
    <property type="entry name" value="membrane protein insertion efficiency factor YidD"/>
    <property type="match status" value="1"/>
</dbReference>
<dbReference type="PANTHER" id="PTHR33383">
    <property type="entry name" value="MEMBRANE PROTEIN INSERTION EFFICIENCY FACTOR-RELATED"/>
    <property type="match status" value="1"/>
</dbReference>
<dbReference type="PANTHER" id="PTHR33383:SF1">
    <property type="entry name" value="MEMBRANE PROTEIN INSERTION EFFICIENCY FACTOR-RELATED"/>
    <property type="match status" value="1"/>
</dbReference>
<dbReference type="Pfam" id="PF01809">
    <property type="entry name" value="YidD"/>
    <property type="match status" value="1"/>
</dbReference>
<dbReference type="SMART" id="SM01234">
    <property type="entry name" value="Haemolytic"/>
    <property type="match status" value="1"/>
</dbReference>
<protein>
    <recommendedName>
        <fullName evidence="1">Putative membrane protein insertion efficiency factor</fullName>
    </recommendedName>
</protein>
<name>YIDD_STAS1</name>
<evidence type="ECO:0000255" key="1">
    <source>
        <dbReference type="HAMAP-Rule" id="MF_00386"/>
    </source>
</evidence>
<feature type="chain" id="PRO_0000171875" description="Putative membrane protein insertion efficiency factor">
    <location>
        <begin position="1"/>
        <end position="83"/>
    </location>
</feature>
<organism>
    <name type="scientific">Staphylococcus saprophyticus subsp. saprophyticus (strain ATCC 15305 / DSM 20229 / NCIMB 8711 / NCTC 7292 / S-41)</name>
    <dbReference type="NCBI Taxonomy" id="342451"/>
    <lineage>
        <taxon>Bacteria</taxon>
        <taxon>Bacillati</taxon>
        <taxon>Bacillota</taxon>
        <taxon>Bacilli</taxon>
        <taxon>Bacillales</taxon>
        <taxon>Staphylococcaceae</taxon>
        <taxon>Staphylococcus</taxon>
    </lineage>
</organism>
<proteinExistence type="inferred from homology"/>
<gene>
    <name type="ordered locus">SSP0972</name>
</gene>
<keyword id="KW-1003">Cell membrane</keyword>
<keyword id="KW-0472">Membrane</keyword>
<keyword id="KW-1185">Reference proteome</keyword>
<reference key="1">
    <citation type="journal article" date="2005" name="Proc. Natl. Acad. Sci. U.S.A.">
        <title>Whole genome sequence of Staphylococcus saprophyticus reveals the pathogenesis of uncomplicated urinary tract infection.</title>
        <authorList>
            <person name="Kuroda M."/>
            <person name="Yamashita A."/>
            <person name="Hirakawa H."/>
            <person name="Kumano M."/>
            <person name="Morikawa K."/>
            <person name="Higashide M."/>
            <person name="Maruyama A."/>
            <person name="Inose Y."/>
            <person name="Matoba K."/>
            <person name="Toh H."/>
            <person name="Kuhara S."/>
            <person name="Hattori M."/>
            <person name="Ohta T."/>
        </authorList>
    </citation>
    <scope>NUCLEOTIDE SEQUENCE [LARGE SCALE GENOMIC DNA]</scope>
    <source>
        <strain>ATCC 15305 / DSM 20229 / NCIMB 8711 / NCTC 7292 / S-41</strain>
    </source>
</reference>
<comment type="function">
    <text evidence="1">Could be involved in insertion of integral membrane proteins into the membrane.</text>
</comment>
<comment type="subcellular location">
    <subcellularLocation>
        <location evidence="1">Cell membrane</location>
        <topology evidence="1">Peripheral membrane protein</topology>
        <orientation evidence="1">Cytoplasmic side</orientation>
    </subcellularLocation>
</comment>
<comment type="similarity">
    <text evidence="1">Belongs to the UPF0161 family.</text>
</comment>
<sequence length="83" mass="9604">MKTIFLGLIHIYQRFISPLTPATCRFYPTCSEYTREAIVVYGPFKGTWLGIKRISKCHPLHKGGFDPVPLKKTKHKKDKNINK</sequence>